<gene>
    <name evidence="1" type="primary">msbA</name>
    <name type="ordered locus">Bfl379</name>
</gene>
<dbReference type="EC" id="7.5.2.6" evidence="1"/>
<dbReference type="EMBL" id="BX248583">
    <property type="protein sequence ID" value="CAD83445.1"/>
    <property type="molecule type" value="Genomic_DNA"/>
</dbReference>
<dbReference type="SMR" id="Q7VR44"/>
<dbReference type="STRING" id="203907.Bfl379"/>
<dbReference type="KEGG" id="bfl:Bfl379"/>
<dbReference type="eggNOG" id="COG1132">
    <property type="taxonomic scope" value="Bacteria"/>
</dbReference>
<dbReference type="HOGENOM" id="CLU_000604_84_3_6"/>
<dbReference type="OrthoDB" id="9806127at2"/>
<dbReference type="Proteomes" id="UP000002192">
    <property type="component" value="Chromosome"/>
</dbReference>
<dbReference type="GO" id="GO:0005886">
    <property type="term" value="C:plasma membrane"/>
    <property type="evidence" value="ECO:0007669"/>
    <property type="project" value="UniProtKB-SubCell"/>
</dbReference>
<dbReference type="GO" id="GO:0015421">
    <property type="term" value="F:ABC-type oligopeptide transporter activity"/>
    <property type="evidence" value="ECO:0007669"/>
    <property type="project" value="TreeGrafter"/>
</dbReference>
<dbReference type="GO" id="GO:0005524">
    <property type="term" value="F:ATP binding"/>
    <property type="evidence" value="ECO:0007669"/>
    <property type="project" value="UniProtKB-KW"/>
</dbReference>
<dbReference type="GO" id="GO:0016887">
    <property type="term" value="F:ATP hydrolysis activity"/>
    <property type="evidence" value="ECO:0007669"/>
    <property type="project" value="InterPro"/>
</dbReference>
<dbReference type="GO" id="GO:0034040">
    <property type="term" value="F:ATPase-coupled lipid transmembrane transporter activity"/>
    <property type="evidence" value="ECO:0007669"/>
    <property type="project" value="InterPro"/>
</dbReference>
<dbReference type="CDD" id="cd18552">
    <property type="entry name" value="ABC_6TM_MsbA_like"/>
    <property type="match status" value="1"/>
</dbReference>
<dbReference type="FunFam" id="3.40.50.300:FF:000140">
    <property type="entry name" value="Lipid A export ATP-binding/permease protein MsbA"/>
    <property type="match status" value="1"/>
</dbReference>
<dbReference type="Gene3D" id="1.20.1560.10">
    <property type="entry name" value="ABC transporter type 1, transmembrane domain"/>
    <property type="match status" value="1"/>
</dbReference>
<dbReference type="Gene3D" id="3.40.50.300">
    <property type="entry name" value="P-loop containing nucleotide triphosphate hydrolases"/>
    <property type="match status" value="1"/>
</dbReference>
<dbReference type="InterPro" id="IPR003593">
    <property type="entry name" value="AAA+_ATPase"/>
</dbReference>
<dbReference type="InterPro" id="IPR011527">
    <property type="entry name" value="ABC1_TM_dom"/>
</dbReference>
<dbReference type="InterPro" id="IPR036640">
    <property type="entry name" value="ABC1_TM_sf"/>
</dbReference>
<dbReference type="InterPro" id="IPR003439">
    <property type="entry name" value="ABC_transporter-like_ATP-bd"/>
</dbReference>
<dbReference type="InterPro" id="IPR011917">
    <property type="entry name" value="ABC_transpr_lipidA"/>
</dbReference>
<dbReference type="InterPro" id="IPR027417">
    <property type="entry name" value="P-loop_NTPase"/>
</dbReference>
<dbReference type="InterPro" id="IPR039421">
    <property type="entry name" value="Type_1_exporter"/>
</dbReference>
<dbReference type="NCBIfam" id="TIGR02203">
    <property type="entry name" value="MsbA_lipidA"/>
    <property type="match status" value="1"/>
</dbReference>
<dbReference type="NCBIfam" id="NF008381">
    <property type="entry name" value="PRK11176.1"/>
    <property type="match status" value="1"/>
</dbReference>
<dbReference type="PANTHER" id="PTHR43394:SF1">
    <property type="entry name" value="ATP-BINDING CASSETTE SUB-FAMILY B MEMBER 10, MITOCHONDRIAL"/>
    <property type="match status" value="1"/>
</dbReference>
<dbReference type="PANTHER" id="PTHR43394">
    <property type="entry name" value="ATP-DEPENDENT PERMEASE MDL1, MITOCHONDRIAL"/>
    <property type="match status" value="1"/>
</dbReference>
<dbReference type="Pfam" id="PF00664">
    <property type="entry name" value="ABC_membrane"/>
    <property type="match status" value="1"/>
</dbReference>
<dbReference type="Pfam" id="PF00005">
    <property type="entry name" value="ABC_tran"/>
    <property type="match status" value="1"/>
</dbReference>
<dbReference type="SMART" id="SM00382">
    <property type="entry name" value="AAA"/>
    <property type="match status" value="1"/>
</dbReference>
<dbReference type="SUPFAM" id="SSF90123">
    <property type="entry name" value="ABC transporter transmembrane region"/>
    <property type="match status" value="1"/>
</dbReference>
<dbReference type="SUPFAM" id="SSF52540">
    <property type="entry name" value="P-loop containing nucleoside triphosphate hydrolases"/>
    <property type="match status" value="1"/>
</dbReference>
<dbReference type="PROSITE" id="PS50929">
    <property type="entry name" value="ABC_TM1F"/>
    <property type="match status" value="1"/>
</dbReference>
<dbReference type="PROSITE" id="PS50893">
    <property type="entry name" value="ABC_TRANSPORTER_2"/>
    <property type="match status" value="1"/>
</dbReference>
<dbReference type="PROSITE" id="PS51239">
    <property type="entry name" value="MSBA"/>
    <property type="match status" value="1"/>
</dbReference>
<accession>Q7VR44</accession>
<reference key="1">
    <citation type="journal article" date="2003" name="Proc. Natl. Acad. Sci. U.S.A.">
        <title>The genome sequence of Blochmannia floridanus: comparative analysis of reduced genomes.</title>
        <authorList>
            <person name="Gil R."/>
            <person name="Silva F.J."/>
            <person name="Zientz E."/>
            <person name="Delmotte F."/>
            <person name="Gonzalez-Candelas F."/>
            <person name="Latorre A."/>
            <person name="Rausell C."/>
            <person name="Kamerbeek J."/>
            <person name="Gadau J."/>
            <person name="Hoelldobler B."/>
            <person name="van Ham R.C.H.J."/>
            <person name="Gross R."/>
            <person name="Moya A."/>
        </authorList>
    </citation>
    <scope>NUCLEOTIDE SEQUENCE [LARGE SCALE GENOMIC DNA]</scope>
</reference>
<keyword id="KW-0067">ATP-binding</keyword>
<keyword id="KW-0997">Cell inner membrane</keyword>
<keyword id="KW-1003">Cell membrane</keyword>
<keyword id="KW-0445">Lipid transport</keyword>
<keyword id="KW-0472">Membrane</keyword>
<keyword id="KW-0547">Nucleotide-binding</keyword>
<keyword id="KW-1185">Reference proteome</keyword>
<keyword id="KW-1278">Translocase</keyword>
<keyword id="KW-0812">Transmembrane</keyword>
<keyword id="KW-1133">Transmembrane helix</keyword>
<keyword id="KW-0813">Transport</keyword>
<sequence>MHYCNNGNISNWKVFRRLWPIINPFKIGLIIASITLIINAVSDSLMLALLKPLLDEGFGKANRSIFMWMPLVLMGLMIMRGMSGFASTYCISWVSGKVVMHIRRLLFNHIMNMPVSFFIEQSTATLMSRITYDADQVASSSSGALITIIREGASVVGLCIMMFYYSWQLSLVLILIMPIISIIIKLVSNKFKDIGKKIQNSMSQLVNSVEQMLKGHKEVLIFGGQHLEQNRFNYLSNRMRQYTMKMVQTSSVFEPLIQFVASLALACVLYIASIPSVIEMLSAGTITVIFSSMIALMKPLKSLTNVSAQFQRGMVACQTLFTILDLKTEKNIGKFSVKRVKGHIIFDNVTFFYPETNTPSLCNINFNIESGKTIALVGRSGSGKSTIVNLLTRFYDVYQGRILLDGLNLNDYTLTSLREQVSVVTQNVYLFNDTIANNIAYARTRFYSRASIEEAAKMAYAMGFISKMKNGFDTIVGENGILLSNGQRQRIAIARALLRNCPILILDEATSSLDTESECIIYKSINILKKNRTSLIIAHRLSTIENADEILVVERGSIVERGIHVDLLNHKGVYSQLYKFQFS</sequence>
<proteinExistence type="inferred from homology"/>
<name>MSBA_BLOFL</name>
<feature type="chain" id="PRO_0000092573" description="ATP-dependent lipid A-core flippase">
    <location>
        <begin position="1"/>
        <end position="583"/>
    </location>
</feature>
<feature type="transmembrane region" description="Helical" evidence="1">
    <location>
        <begin position="18"/>
        <end position="38"/>
    </location>
</feature>
<feature type="transmembrane region" description="Helical" evidence="1">
    <location>
        <begin position="65"/>
        <end position="85"/>
    </location>
</feature>
<feature type="transmembrane region" description="Helical" evidence="1">
    <location>
        <begin position="105"/>
        <end position="127"/>
    </location>
</feature>
<feature type="transmembrane region" description="Helical" evidence="1">
    <location>
        <begin position="143"/>
        <end position="163"/>
    </location>
</feature>
<feature type="transmembrane region" description="Helical" evidence="1">
    <location>
        <begin position="167"/>
        <end position="187"/>
    </location>
</feature>
<feature type="transmembrane region" description="Helical" evidence="1">
    <location>
        <begin position="252"/>
        <end position="272"/>
    </location>
</feature>
<feature type="transmembrane region" description="Helical" evidence="1">
    <location>
        <begin position="277"/>
        <end position="297"/>
    </location>
</feature>
<feature type="domain" description="ABC transmembrane type-1" evidence="1">
    <location>
        <begin position="30"/>
        <end position="312"/>
    </location>
</feature>
<feature type="domain" description="ABC transporter" evidence="1">
    <location>
        <begin position="344"/>
        <end position="580"/>
    </location>
</feature>
<feature type="binding site" evidence="1">
    <location>
        <begin position="378"/>
        <end position="385"/>
    </location>
    <ligand>
        <name>ATP</name>
        <dbReference type="ChEBI" id="CHEBI:30616"/>
    </ligand>
</feature>
<organism>
    <name type="scientific">Blochmanniella floridana</name>
    <dbReference type="NCBI Taxonomy" id="203907"/>
    <lineage>
        <taxon>Bacteria</taxon>
        <taxon>Pseudomonadati</taxon>
        <taxon>Pseudomonadota</taxon>
        <taxon>Gammaproteobacteria</taxon>
        <taxon>Enterobacterales</taxon>
        <taxon>Enterobacteriaceae</taxon>
        <taxon>ant endosymbionts</taxon>
        <taxon>Candidatus Blochmanniella</taxon>
    </lineage>
</organism>
<protein>
    <recommendedName>
        <fullName evidence="1">ATP-dependent lipid A-core flippase</fullName>
        <ecNumber evidence="1">7.5.2.6</ecNumber>
    </recommendedName>
    <alternativeName>
        <fullName evidence="1">Lipid A export ATP-binding/permease protein MsbA</fullName>
    </alternativeName>
</protein>
<evidence type="ECO:0000255" key="1">
    <source>
        <dbReference type="HAMAP-Rule" id="MF_01703"/>
    </source>
</evidence>
<comment type="function">
    <text evidence="1">Involved in lipopolysaccharide (LPS) biosynthesis. Translocates lipid A-core from the inner to the outer leaflet of the inner membrane. Transmembrane domains (TMD) form a pore in the inner membrane and the ATP-binding domain (NBD) is responsible for energy generation.</text>
</comment>
<comment type="catalytic activity">
    <reaction evidence="1">
        <text>ATP + H2O + lipid A-core oligosaccharideSide 1 = ADP + phosphate + lipid A-core oligosaccharideSide 2.</text>
        <dbReference type="EC" id="7.5.2.6"/>
    </reaction>
</comment>
<comment type="subunit">
    <text evidence="1">Homodimer.</text>
</comment>
<comment type="subcellular location">
    <subcellularLocation>
        <location evidence="1">Cell inner membrane</location>
        <topology evidence="1">Multi-pass membrane protein</topology>
    </subcellularLocation>
</comment>
<comment type="domain">
    <text evidence="1">In MsbA the ATP-binding domain (NBD) and the transmembrane domain (TMD) are fused.</text>
</comment>
<comment type="similarity">
    <text evidence="1">Belongs to the ABC transporter superfamily. Lipid exporter (TC 3.A.1.106) family.</text>
</comment>